<accession>A9NE34</accession>
<dbReference type="EC" id="3.6.-.-" evidence="1"/>
<dbReference type="EMBL" id="CP000896">
    <property type="protein sequence ID" value="ABX81994.1"/>
    <property type="molecule type" value="Genomic_DNA"/>
</dbReference>
<dbReference type="RefSeq" id="WP_012243325.1">
    <property type="nucleotide sequence ID" value="NC_010163.1"/>
</dbReference>
<dbReference type="SMR" id="A9NE34"/>
<dbReference type="STRING" id="441768.ACL_1403"/>
<dbReference type="GeneID" id="41339532"/>
<dbReference type="KEGG" id="acl:ACL_1403"/>
<dbReference type="eggNOG" id="COG0486">
    <property type="taxonomic scope" value="Bacteria"/>
</dbReference>
<dbReference type="HOGENOM" id="CLU_019624_4_1_14"/>
<dbReference type="OrthoDB" id="9805918at2"/>
<dbReference type="Proteomes" id="UP000008558">
    <property type="component" value="Chromosome"/>
</dbReference>
<dbReference type="GO" id="GO:0005829">
    <property type="term" value="C:cytosol"/>
    <property type="evidence" value="ECO:0007669"/>
    <property type="project" value="TreeGrafter"/>
</dbReference>
<dbReference type="GO" id="GO:0005525">
    <property type="term" value="F:GTP binding"/>
    <property type="evidence" value="ECO:0007669"/>
    <property type="project" value="UniProtKB-UniRule"/>
</dbReference>
<dbReference type="GO" id="GO:0003924">
    <property type="term" value="F:GTPase activity"/>
    <property type="evidence" value="ECO:0007669"/>
    <property type="project" value="UniProtKB-UniRule"/>
</dbReference>
<dbReference type="GO" id="GO:0046872">
    <property type="term" value="F:metal ion binding"/>
    <property type="evidence" value="ECO:0007669"/>
    <property type="project" value="UniProtKB-KW"/>
</dbReference>
<dbReference type="GO" id="GO:0030488">
    <property type="term" value="P:tRNA methylation"/>
    <property type="evidence" value="ECO:0007669"/>
    <property type="project" value="TreeGrafter"/>
</dbReference>
<dbReference type="GO" id="GO:0002098">
    <property type="term" value="P:tRNA wobble uridine modification"/>
    <property type="evidence" value="ECO:0007669"/>
    <property type="project" value="TreeGrafter"/>
</dbReference>
<dbReference type="CDD" id="cd04164">
    <property type="entry name" value="trmE"/>
    <property type="match status" value="1"/>
</dbReference>
<dbReference type="CDD" id="cd14858">
    <property type="entry name" value="TrmE_N"/>
    <property type="match status" value="1"/>
</dbReference>
<dbReference type="FunFam" id="3.30.1360.120:FF:000003">
    <property type="entry name" value="tRNA modification GTPase MnmE"/>
    <property type="match status" value="1"/>
</dbReference>
<dbReference type="FunFam" id="3.40.50.300:FF:001376">
    <property type="entry name" value="tRNA modification GTPase MnmE"/>
    <property type="match status" value="1"/>
</dbReference>
<dbReference type="Gene3D" id="3.40.50.300">
    <property type="entry name" value="P-loop containing nucleotide triphosphate hydrolases"/>
    <property type="match status" value="1"/>
</dbReference>
<dbReference type="Gene3D" id="3.30.1360.120">
    <property type="entry name" value="Probable tRNA modification gtpase trme, domain 1"/>
    <property type="match status" value="1"/>
</dbReference>
<dbReference type="Gene3D" id="1.20.120.430">
    <property type="entry name" value="tRNA modification GTPase MnmE domain 2"/>
    <property type="match status" value="1"/>
</dbReference>
<dbReference type="HAMAP" id="MF_00379">
    <property type="entry name" value="GTPase_MnmE"/>
    <property type="match status" value="1"/>
</dbReference>
<dbReference type="InterPro" id="IPR031168">
    <property type="entry name" value="G_TrmE"/>
</dbReference>
<dbReference type="InterPro" id="IPR006073">
    <property type="entry name" value="GTP-bd"/>
</dbReference>
<dbReference type="InterPro" id="IPR018948">
    <property type="entry name" value="GTP-bd_TrmE_N"/>
</dbReference>
<dbReference type="InterPro" id="IPR004520">
    <property type="entry name" value="GTPase_MnmE"/>
</dbReference>
<dbReference type="InterPro" id="IPR027368">
    <property type="entry name" value="MnmE_dom2"/>
</dbReference>
<dbReference type="InterPro" id="IPR025867">
    <property type="entry name" value="MnmE_helical"/>
</dbReference>
<dbReference type="InterPro" id="IPR027417">
    <property type="entry name" value="P-loop_NTPase"/>
</dbReference>
<dbReference type="InterPro" id="IPR005225">
    <property type="entry name" value="Small_GTP-bd"/>
</dbReference>
<dbReference type="InterPro" id="IPR027266">
    <property type="entry name" value="TrmE/GcvT_dom1"/>
</dbReference>
<dbReference type="NCBIfam" id="TIGR00450">
    <property type="entry name" value="mnmE_trmE_thdF"/>
    <property type="match status" value="1"/>
</dbReference>
<dbReference type="NCBIfam" id="TIGR00231">
    <property type="entry name" value="small_GTP"/>
    <property type="match status" value="1"/>
</dbReference>
<dbReference type="PANTHER" id="PTHR42714">
    <property type="entry name" value="TRNA MODIFICATION GTPASE GTPBP3"/>
    <property type="match status" value="1"/>
</dbReference>
<dbReference type="PANTHER" id="PTHR42714:SF2">
    <property type="entry name" value="TRNA MODIFICATION GTPASE GTPBP3, MITOCHONDRIAL"/>
    <property type="match status" value="1"/>
</dbReference>
<dbReference type="Pfam" id="PF01926">
    <property type="entry name" value="MMR_HSR1"/>
    <property type="match status" value="1"/>
</dbReference>
<dbReference type="Pfam" id="PF12631">
    <property type="entry name" value="MnmE_helical"/>
    <property type="match status" value="1"/>
</dbReference>
<dbReference type="Pfam" id="PF10396">
    <property type="entry name" value="TrmE_N"/>
    <property type="match status" value="1"/>
</dbReference>
<dbReference type="PRINTS" id="PR00449">
    <property type="entry name" value="RASTRNSFRMNG"/>
</dbReference>
<dbReference type="SUPFAM" id="SSF52540">
    <property type="entry name" value="P-loop containing nucleoside triphosphate hydrolases"/>
    <property type="match status" value="1"/>
</dbReference>
<dbReference type="SUPFAM" id="SSF116878">
    <property type="entry name" value="TrmE connector domain"/>
    <property type="match status" value="1"/>
</dbReference>
<dbReference type="PROSITE" id="PS51709">
    <property type="entry name" value="G_TRME"/>
    <property type="match status" value="1"/>
</dbReference>
<organism>
    <name type="scientific">Acholeplasma laidlawii (strain PG-8A)</name>
    <dbReference type="NCBI Taxonomy" id="441768"/>
    <lineage>
        <taxon>Bacteria</taxon>
        <taxon>Bacillati</taxon>
        <taxon>Mycoplasmatota</taxon>
        <taxon>Mollicutes</taxon>
        <taxon>Acholeplasmatales</taxon>
        <taxon>Acholeplasmataceae</taxon>
        <taxon>Acholeplasma</taxon>
    </lineage>
</organism>
<proteinExistence type="inferred from homology"/>
<name>MNME_ACHLI</name>
<protein>
    <recommendedName>
        <fullName evidence="1">tRNA modification GTPase MnmE</fullName>
        <ecNumber evidence="1">3.6.-.-</ecNumber>
    </recommendedName>
</protein>
<feature type="chain" id="PRO_1000079999" description="tRNA modification GTPase MnmE">
    <location>
        <begin position="1"/>
        <end position="448"/>
    </location>
</feature>
<feature type="domain" description="TrmE-type G">
    <location>
        <begin position="219"/>
        <end position="369"/>
    </location>
</feature>
<feature type="binding site" evidence="1">
    <location>
        <position position="22"/>
    </location>
    <ligand>
        <name>(6S)-5-formyl-5,6,7,8-tetrahydrofolate</name>
        <dbReference type="ChEBI" id="CHEBI:57457"/>
    </ligand>
</feature>
<feature type="binding site" evidence="1">
    <location>
        <position position="83"/>
    </location>
    <ligand>
        <name>(6S)-5-formyl-5,6,7,8-tetrahydrofolate</name>
        <dbReference type="ChEBI" id="CHEBI:57457"/>
    </ligand>
</feature>
<feature type="binding site" evidence="1">
    <location>
        <position position="122"/>
    </location>
    <ligand>
        <name>(6S)-5-formyl-5,6,7,8-tetrahydrofolate</name>
        <dbReference type="ChEBI" id="CHEBI:57457"/>
    </ligand>
</feature>
<feature type="binding site" evidence="1">
    <location>
        <begin position="229"/>
        <end position="234"/>
    </location>
    <ligand>
        <name>GTP</name>
        <dbReference type="ChEBI" id="CHEBI:37565"/>
    </ligand>
</feature>
<feature type="binding site" evidence="1">
    <location>
        <position position="229"/>
    </location>
    <ligand>
        <name>K(+)</name>
        <dbReference type="ChEBI" id="CHEBI:29103"/>
    </ligand>
</feature>
<feature type="binding site" evidence="1">
    <location>
        <position position="233"/>
    </location>
    <ligand>
        <name>Mg(2+)</name>
        <dbReference type="ChEBI" id="CHEBI:18420"/>
    </ligand>
</feature>
<feature type="binding site" evidence="1">
    <location>
        <begin position="248"/>
        <end position="254"/>
    </location>
    <ligand>
        <name>GTP</name>
        <dbReference type="ChEBI" id="CHEBI:37565"/>
    </ligand>
</feature>
<feature type="binding site" evidence="1">
    <location>
        <position position="248"/>
    </location>
    <ligand>
        <name>K(+)</name>
        <dbReference type="ChEBI" id="CHEBI:29103"/>
    </ligand>
</feature>
<feature type="binding site" evidence="1">
    <location>
        <position position="250"/>
    </location>
    <ligand>
        <name>K(+)</name>
        <dbReference type="ChEBI" id="CHEBI:29103"/>
    </ligand>
</feature>
<feature type="binding site" evidence="1">
    <location>
        <position position="253"/>
    </location>
    <ligand>
        <name>K(+)</name>
        <dbReference type="ChEBI" id="CHEBI:29103"/>
    </ligand>
</feature>
<feature type="binding site" evidence="1">
    <location>
        <position position="254"/>
    </location>
    <ligand>
        <name>Mg(2+)</name>
        <dbReference type="ChEBI" id="CHEBI:18420"/>
    </ligand>
</feature>
<feature type="binding site" evidence="1">
    <location>
        <begin position="273"/>
        <end position="276"/>
    </location>
    <ligand>
        <name>GTP</name>
        <dbReference type="ChEBI" id="CHEBI:37565"/>
    </ligand>
</feature>
<feature type="binding site" evidence="1">
    <location>
        <position position="448"/>
    </location>
    <ligand>
        <name>(6S)-5-formyl-5,6,7,8-tetrahydrofolate</name>
        <dbReference type="ChEBI" id="CHEBI:57457"/>
    </ligand>
</feature>
<gene>
    <name evidence="1" type="primary">mnmE</name>
    <name evidence="1" type="synonym">trmE</name>
    <name type="ordered locus">ACL_1403</name>
</gene>
<reference key="1">
    <citation type="journal article" date="2011" name="J. Bacteriol.">
        <title>Complete genome and proteome of Acholeplasma laidlawii.</title>
        <authorList>
            <person name="Lazarev V.N."/>
            <person name="Levitskii S.A."/>
            <person name="Basovskii Y.I."/>
            <person name="Chukin M.M."/>
            <person name="Akopian T.A."/>
            <person name="Vereshchagin V.V."/>
            <person name="Kostrjukova E.S."/>
            <person name="Kovaleva G.Y."/>
            <person name="Kazanov M.D."/>
            <person name="Malko D.B."/>
            <person name="Vitreschak A.G."/>
            <person name="Sernova N.V."/>
            <person name="Gelfand M.S."/>
            <person name="Demina I.A."/>
            <person name="Serebryakova M.V."/>
            <person name="Galyamina M.A."/>
            <person name="Vtyurin N.N."/>
            <person name="Rogov S.I."/>
            <person name="Alexeev D.G."/>
            <person name="Ladygina V.G."/>
            <person name="Govorun V.M."/>
        </authorList>
    </citation>
    <scope>NUCLEOTIDE SEQUENCE [LARGE SCALE GENOMIC DNA]</scope>
    <source>
        <strain>PG-8A</strain>
    </source>
</reference>
<evidence type="ECO:0000255" key="1">
    <source>
        <dbReference type="HAMAP-Rule" id="MF_00379"/>
    </source>
</evidence>
<comment type="function">
    <text evidence="1">Exhibits a very high intrinsic GTPase hydrolysis rate. Involved in the addition of a carboxymethylaminomethyl (cmnm) group at the wobble position (U34) of certain tRNAs, forming tRNA-cmnm(5)s(2)U34.</text>
</comment>
<comment type="cofactor">
    <cofactor evidence="1">
        <name>K(+)</name>
        <dbReference type="ChEBI" id="CHEBI:29103"/>
    </cofactor>
    <text evidence="1">Binds 1 potassium ion per subunit.</text>
</comment>
<comment type="subunit">
    <text evidence="1">Homodimer. Heterotetramer of two MnmE and two MnmG subunits.</text>
</comment>
<comment type="subcellular location">
    <subcellularLocation>
        <location evidence="1">Cytoplasm</location>
    </subcellularLocation>
</comment>
<comment type="similarity">
    <text evidence="1">Belongs to the TRAFAC class TrmE-Era-EngA-EngB-Septin-like GTPase superfamily. TrmE GTPase family.</text>
</comment>
<sequence length="448" mass="49782">MQFQTIAAIATPLGTAGISVIRVSGDEAISKVNQIFKGKNLNKVKSHTIHYGHILNEDGSILDEVMISVFIAPKSFTKEDVVEISTHGGILITQKVLERILETGIELAQPGEFSKRAFLNGRIDLVQAEAIMDIIHATNENAIKVANKALNKATSSMIDNLKSKVLTLIAQIEVNIDYPEYDDAIIMSKELIYPRVNDLLDEINDILTKSKRTQYIREGVKTVIVGRPNVGKSSLLNALLNEERAIVSDIAGTTRDTIDAFVNLDGVTLQLIDTAGIRDALDTIEKIGVDRSRKAIHEAELVLLVLDLSQKLTKEDEMLLTLTEHKNRIIIGNKKDLPSYLEIDTNVQISTLEKEGLSVLESEILKTLKLDNLVDKDFNYLSNVRHIQKLKEAKTSLESVINAIHHDMPVDIYAVDLTTAWNRLGEILGNHQYGDLLTELFSKFCLGK</sequence>
<keyword id="KW-0963">Cytoplasm</keyword>
<keyword id="KW-0342">GTP-binding</keyword>
<keyword id="KW-0378">Hydrolase</keyword>
<keyword id="KW-0460">Magnesium</keyword>
<keyword id="KW-0479">Metal-binding</keyword>
<keyword id="KW-0547">Nucleotide-binding</keyword>
<keyword id="KW-0630">Potassium</keyword>
<keyword id="KW-1185">Reference proteome</keyword>
<keyword id="KW-0819">tRNA processing</keyword>